<sequence length="284" mass="31802">MESLSELSVQFSQLSMFPFFDMAHYVVSVMSAREQAGALDIAARSPMASWFSAMLYCFGGGILSSILLAEPPIAVLSNTTNIMLASTIWYMVYYFPYDLFYNCFFFLPIRLIIAGMKEVTRTWKILSGVTHAHSHYKDALLVMITIGWARGAGGGLISNFEQLVRGVWKPESNEFLKMSYPVKVTLIGAVLFTLQHGHYLPISRHNLMLIYTMFLVLIKVTMMLTHSTASPFLPLETPLQRILFGQRQKPSEVRQSASSSGAKGKPSKKTLDKDSGEQSKKKDS</sequence>
<dbReference type="EMBL" id="BC079749">
    <property type="protein sequence ID" value="AAH79749.1"/>
    <property type="molecule type" value="mRNA"/>
</dbReference>
<dbReference type="EMBL" id="BC106250">
    <property type="protein sequence ID" value="AAI06251.1"/>
    <property type="molecule type" value="mRNA"/>
</dbReference>
<dbReference type="RefSeq" id="NP_001121148.1">
    <property type="nucleotide sequence ID" value="NM_001127676.1"/>
</dbReference>
<dbReference type="SMR" id="Q3KQE5"/>
<dbReference type="DNASU" id="446269"/>
<dbReference type="GeneID" id="446269"/>
<dbReference type="KEGG" id="xla:446269"/>
<dbReference type="AGR" id="Xenbase:XB-GENE-5849720"/>
<dbReference type="CTD" id="446269"/>
<dbReference type="Xenbase" id="XB-GENE-5849720">
    <property type="gene designation" value="tmem38b.S"/>
</dbReference>
<dbReference type="OMA" id="HNELLRP"/>
<dbReference type="OrthoDB" id="195817at2759"/>
<dbReference type="Proteomes" id="UP000186698">
    <property type="component" value="Chromosome 1S"/>
</dbReference>
<dbReference type="Bgee" id="446269">
    <property type="expression patterns" value="Expressed in kidney and 19 other cell types or tissues"/>
</dbReference>
<dbReference type="GO" id="GO:0005789">
    <property type="term" value="C:endoplasmic reticulum membrane"/>
    <property type="evidence" value="ECO:0007669"/>
    <property type="project" value="UniProtKB-SubCell"/>
</dbReference>
<dbReference type="GO" id="GO:0042802">
    <property type="term" value="F:identical protein binding"/>
    <property type="evidence" value="ECO:0007669"/>
    <property type="project" value="InterPro"/>
</dbReference>
<dbReference type="GO" id="GO:0005267">
    <property type="term" value="F:potassium channel activity"/>
    <property type="evidence" value="ECO:0000250"/>
    <property type="project" value="UniProtKB"/>
</dbReference>
<dbReference type="GO" id="GO:0051279">
    <property type="term" value="P:regulation of release of sequestered calcium ion into cytosol"/>
    <property type="evidence" value="ECO:0000250"/>
    <property type="project" value="UniProtKB"/>
</dbReference>
<dbReference type="InterPro" id="IPR007866">
    <property type="entry name" value="TRIC_channel"/>
</dbReference>
<dbReference type="PANTHER" id="PTHR12454">
    <property type="entry name" value="TRIMERIC INTRACELLULAR CATION CHANNEL"/>
    <property type="match status" value="1"/>
</dbReference>
<dbReference type="PANTHER" id="PTHR12454:SF5">
    <property type="entry name" value="TRIMERIC INTRACELLULAR CATION CHANNEL TYPE B"/>
    <property type="match status" value="1"/>
</dbReference>
<dbReference type="Pfam" id="PF05197">
    <property type="entry name" value="TRIC"/>
    <property type="match status" value="1"/>
</dbReference>
<protein>
    <recommendedName>
        <fullName>Trimeric intracellular cation channel type B-A</fullName>
        <shortName>TRIC-B-A</shortName>
        <shortName>TRICB-A</shortName>
    </recommendedName>
    <alternativeName>
        <fullName>Transmembrane protein 38B-A</fullName>
    </alternativeName>
</protein>
<feature type="chain" id="PRO_0000291528" description="Trimeric intracellular cation channel type B-A">
    <location>
        <begin position="1"/>
        <end position="284"/>
    </location>
</feature>
<feature type="topological domain" description="Lumenal" evidence="6">
    <location>
        <begin position="1"/>
        <end position="15"/>
    </location>
</feature>
<feature type="transmembrane region" description="Helical;Name=1" evidence="4">
    <location>
        <begin position="16"/>
        <end position="33"/>
    </location>
</feature>
<feature type="topological domain" description="Cytoplasmic" evidence="6">
    <location>
        <begin position="34"/>
        <end position="46"/>
    </location>
</feature>
<feature type="transmembrane region" description="Helical;Name=2" evidence="4">
    <location>
        <begin position="47"/>
        <end position="68"/>
    </location>
</feature>
<feature type="topological domain" description="Lumenal" evidence="6">
    <location>
        <begin position="69"/>
        <end position="79"/>
    </location>
</feature>
<feature type="transmembrane region" description="Helical;Name=3" evidence="4">
    <location>
        <begin position="80"/>
        <end position="99"/>
    </location>
</feature>
<feature type="topological domain" description="Cytoplasmic" evidence="6">
    <location>
        <begin position="100"/>
        <end position="102"/>
    </location>
</feature>
<feature type="transmembrane region" description="Helical;Name=4" evidence="4">
    <location>
        <begin position="103"/>
        <end position="121"/>
    </location>
</feature>
<feature type="topological domain" description="Lumenal" evidence="6">
    <location>
        <begin position="122"/>
        <end position="137"/>
    </location>
</feature>
<feature type="transmembrane region" description="Helical;Name=5" evidence="4">
    <location>
        <begin position="138"/>
        <end position="155"/>
    </location>
</feature>
<feature type="topological domain" description="Cytoplasmic" evidence="6">
    <location>
        <begin position="156"/>
        <end position="177"/>
    </location>
</feature>
<feature type="transmembrane region" description="Helical;Name=6" evidence="4">
    <location>
        <begin position="178"/>
        <end position="195"/>
    </location>
</feature>
<feature type="topological domain" description="Lumenal" evidence="6">
    <location>
        <begin position="196"/>
        <end position="206"/>
    </location>
</feature>
<feature type="transmembrane region" description="Helical;Name=7" evidence="4">
    <location>
        <begin position="207"/>
        <end position="224"/>
    </location>
</feature>
<feature type="topological domain" description="Cytoplasmic" evidence="6">
    <location>
        <begin position="225"/>
        <end position="284"/>
    </location>
</feature>
<feature type="region of interest" description="Disordered" evidence="5">
    <location>
        <begin position="246"/>
        <end position="284"/>
    </location>
</feature>
<feature type="compositionally biased region" description="Basic and acidic residues" evidence="5">
    <location>
        <begin position="269"/>
        <end position="284"/>
    </location>
</feature>
<feature type="binding site" evidence="3">
    <location>
        <position position="117"/>
    </location>
    <ligand>
        <name>a 1,2-diacyl-sn-glycero-3-phospho-(1D-myo-inositol-4,5-bisphosphate)</name>
        <dbReference type="ChEBI" id="CHEBI:58456"/>
    </ligand>
</feature>
<feature type="binding site" evidence="3">
    <location>
        <position position="121"/>
    </location>
    <ligand>
        <name>a 1,2-diacyl-sn-glycero-3-phospho-(1D-myo-inositol-4,5-bisphosphate)</name>
        <dbReference type="ChEBI" id="CHEBI:58456"/>
    </ligand>
</feature>
<feature type="sequence conflict" description="In Ref. 1; AAH79749." evidence="6" ref="1">
    <original>L</original>
    <variation>V</variation>
    <location>
        <position position="7"/>
    </location>
</feature>
<gene>
    <name type="primary">tmem38b-a</name>
</gene>
<organism>
    <name type="scientific">Xenopus laevis</name>
    <name type="common">African clawed frog</name>
    <dbReference type="NCBI Taxonomy" id="8355"/>
    <lineage>
        <taxon>Eukaryota</taxon>
        <taxon>Metazoa</taxon>
        <taxon>Chordata</taxon>
        <taxon>Craniata</taxon>
        <taxon>Vertebrata</taxon>
        <taxon>Euteleostomi</taxon>
        <taxon>Amphibia</taxon>
        <taxon>Batrachia</taxon>
        <taxon>Anura</taxon>
        <taxon>Pipoidea</taxon>
        <taxon>Pipidae</taxon>
        <taxon>Xenopodinae</taxon>
        <taxon>Xenopus</taxon>
        <taxon>Xenopus</taxon>
    </lineage>
</organism>
<accession>Q3KQE5</accession>
<accession>Q68FK1</accession>
<proteinExistence type="evidence at transcript level"/>
<reference key="1">
    <citation type="submission" date="2005-10" db="EMBL/GenBank/DDBJ databases">
        <authorList>
            <consortium name="NIH - Xenopus Gene Collection (XGC) project"/>
        </authorList>
    </citation>
    <scope>NUCLEOTIDE SEQUENCE [LARGE SCALE MRNA]</scope>
    <source>
        <tissue>Oocyte</tissue>
        <tissue>Testis</tissue>
    </source>
</reference>
<evidence type="ECO:0000250" key="1">
    <source>
        <dbReference type="UniProtKB" id="Q6GN30"/>
    </source>
</evidence>
<evidence type="ECO:0000250" key="2">
    <source>
        <dbReference type="UniProtKB" id="Q9DAV9"/>
    </source>
</evidence>
<evidence type="ECO:0000250" key="3">
    <source>
        <dbReference type="UniProtKB" id="Q9NA73"/>
    </source>
</evidence>
<evidence type="ECO:0000255" key="4"/>
<evidence type="ECO:0000256" key="5">
    <source>
        <dbReference type="SAM" id="MobiDB-lite"/>
    </source>
</evidence>
<evidence type="ECO:0000305" key="6"/>
<comment type="function">
    <text evidence="1">Intracellular monovalent cation channel required for maintenance of rapid intracellular calcium release. Acts as a potassium counter-ion channel that functions in synchronization with calcium release from intracellular stores. Activated by increased cytosolic Ca(2+) levels.</text>
</comment>
<comment type="catalytic activity">
    <reaction evidence="1">
        <text>K(+)(in) = K(+)(out)</text>
        <dbReference type="Rhea" id="RHEA:29463"/>
        <dbReference type="ChEBI" id="CHEBI:29103"/>
    </reaction>
</comment>
<comment type="activity regulation">
    <text evidence="1">Channel activity is activated by increased cytosolic Ca(2+) levels and blocked by luminal high Ca(2+) levels.</text>
</comment>
<comment type="subunit">
    <text evidence="1">Homotrimer; conformation seems to be controled by binding to diacylglycerol (DAG).</text>
</comment>
<comment type="subcellular location">
    <subcellularLocation>
        <location evidence="2">Endoplasmic reticulum membrane</location>
        <topology evidence="2">Multi-pass membrane protein</topology>
    </subcellularLocation>
</comment>
<comment type="similarity">
    <text evidence="6">Belongs to the TMEM38 family.</text>
</comment>
<keyword id="KW-0256">Endoplasmic reticulum</keyword>
<keyword id="KW-0407">Ion channel</keyword>
<keyword id="KW-0406">Ion transport</keyword>
<keyword id="KW-0472">Membrane</keyword>
<keyword id="KW-0630">Potassium</keyword>
<keyword id="KW-0631">Potassium channel</keyword>
<keyword id="KW-0633">Potassium transport</keyword>
<keyword id="KW-1185">Reference proteome</keyword>
<keyword id="KW-0812">Transmembrane</keyword>
<keyword id="KW-1133">Transmembrane helix</keyword>
<keyword id="KW-0813">Transport</keyword>
<name>T38BA_XENLA</name>